<comment type="function">
    <text evidence="1">Promotes RNA polymerase assembly. Latches the N- and C-terminal regions of the beta' subunit thereby facilitating its interaction with the beta and alpha subunits (By similarity).</text>
</comment>
<comment type="catalytic activity">
    <reaction>
        <text>RNA(n) + a ribonucleoside 5'-triphosphate = RNA(n+1) + diphosphate</text>
        <dbReference type="Rhea" id="RHEA:21248"/>
        <dbReference type="Rhea" id="RHEA-COMP:14527"/>
        <dbReference type="Rhea" id="RHEA-COMP:17342"/>
        <dbReference type="ChEBI" id="CHEBI:33019"/>
        <dbReference type="ChEBI" id="CHEBI:61557"/>
        <dbReference type="ChEBI" id="CHEBI:140395"/>
        <dbReference type="EC" id="2.7.7.6"/>
    </reaction>
</comment>
<comment type="subunit">
    <text evidence="1">The RNAP catalytic core consists of 2 alpha, 1 beta, 1 beta' and 1 omega subunit. When a sigma factor is associated with the core the holoenzyme is formed, which can initiate transcription (By similarity).</text>
</comment>
<comment type="similarity">
    <text evidence="3">Belongs to the RNA polymerase subunit omega family.</text>
</comment>
<gene>
    <name type="primary">rpoZ</name>
    <name type="ordered locus">VC_2709</name>
</gene>
<protein>
    <recommendedName>
        <fullName>DNA-directed RNA polymerase subunit omega</fullName>
        <shortName>RNAP omega subunit</shortName>
        <ecNumber>2.7.7.6</ecNumber>
    </recommendedName>
    <alternativeName>
        <fullName>RNA polymerase omega subunit</fullName>
    </alternativeName>
    <alternativeName>
        <fullName>Transcriptase subunit omega</fullName>
    </alternativeName>
</protein>
<dbReference type="EC" id="2.7.7.6"/>
<dbReference type="EMBL" id="AE003852">
    <property type="protein sequence ID" value="AAF95849.1"/>
    <property type="molecule type" value="Genomic_DNA"/>
</dbReference>
<dbReference type="PIR" id="A82044">
    <property type="entry name" value="A82044"/>
</dbReference>
<dbReference type="RefSeq" id="NP_232336.1">
    <property type="nucleotide sequence ID" value="NC_002505.1"/>
</dbReference>
<dbReference type="RefSeq" id="WP_000135052.1">
    <property type="nucleotide sequence ID" value="NZ_LT906614.1"/>
</dbReference>
<dbReference type="SMR" id="Q9KNM3"/>
<dbReference type="STRING" id="243277.VC_2709"/>
<dbReference type="DNASU" id="2615537"/>
<dbReference type="EnsemblBacteria" id="AAF95849">
    <property type="protein sequence ID" value="AAF95849"/>
    <property type="gene ID" value="VC_2709"/>
</dbReference>
<dbReference type="GeneID" id="94012648"/>
<dbReference type="KEGG" id="vch:VC_2709"/>
<dbReference type="PATRIC" id="fig|243277.26.peg.2584"/>
<dbReference type="eggNOG" id="COG1758">
    <property type="taxonomic scope" value="Bacteria"/>
</dbReference>
<dbReference type="HOGENOM" id="CLU_125406_5_3_6"/>
<dbReference type="Proteomes" id="UP000000584">
    <property type="component" value="Chromosome 1"/>
</dbReference>
<dbReference type="GO" id="GO:0000345">
    <property type="term" value="C:cytosolic DNA-directed RNA polymerase complex"/>
    <property type="evidence" value="ECO:0000318"/>
    <property type="project" value="GO_Central"/>
</dbReference>
<dbReference type="GO" id="GO:0001000">
    <property type="term" value="F:bacterial-type RNA polymerase core enzyme binding"/>
    <property type="evidence" value="ECO:0000318"/>
    <property type="project" value="GO_Central"/>
</dbReference>
<dbReference type="GO" id="GO:0003677">
    <property type="term" value="F:DNA binding"/>
    <property type="evidence" value="ECO:0007669"/>
    <property type="project" value="UniProtKB-UniRule"/>
</dbReference>
<dbReference type="GO" id="GO:0003899">
    <property type="term" value="F:DNA-directed RNA polymerase activity"/>
    <property type="evidence" value="ECO:0007669"/>
    <property type="project" value="UniProtKB-UniRule"/>
</dbReference>
<dbReference type="GO" id="GO:0006352">
    <property type="term" value="P:DNA-templated transcription initiation"/>
    <property type="evidence" value="ECO:0000318"/>
    <property type="project" value="GO_Central"/>
</dbReference>
<dbReference type="FunFam" id="3.90.940.10:FF:000001">
    <property type="entry name" value="DNA-directed RNA polymerase subunit omega"/>
    <property type="match status" value="1"/>
</dbReference>
<dbReference type="Gene3D" id="3.90.940.10">
    <property type="match status" value="1"/>
</dbReference>
<dbReference type="HAMAP" id="MF_00366">
    <property type="entry name" value="RNApol_bact_RpoZ"/>
    <property type="match status" value="1"/>
</dbReference>
<dbReference type="InterPro" id="IPR003716">
    <property type="entry name" value="DNA-dir_RNA_pol_omega"/>
</dbReference>
<dbReference type="InterPro" id="IPR006110">
    <property type="entry name" value="Pol_omega/Rpo6/RPB6"/>
</dbReference>
<dbReference type="InterPro" id="IPR036161">
    <property type="entry name" value="RPB6/omega-like_sf"/>
</dbReference>
<dbReference type="NCBIfam" id="TIGR00690">
    <property type="entry name" value="rpoZ"/>
    <property type="match status" value="1"/>
</dbReference>
<dbReference type="PANTHER" id="PTHR34476">
    <property type="entry name" value="DNA-DIRECTED RNA POLYMERASE SUBUNIT OMEGA"/>
    <property type="match status" value="1"/>
</dbReference>
<dbReference type="PANTHER" id="PTHR34476:SF1">
    <property type="entry name" value="DNA-DIRECTED RNA POLYMERASE SUBUNIT OMEGA"/>
    <property type="match status" value="1"/>
</dbReference>
<dbReference type="Pfam" id="PF01192">
    <property type="entry name" value="RNA_pol_Rpb6"/>
    <property type="match status" value="1"/>
</dbReference>
<dbReference type="SMART" id="SM01409">
    <property type="entry name" value="RNA_pol_Rpb6"/>
    <property type="match status" value="1"/>
</dbReference>
<dbReference type="SUPFAM" id="SSF63562">
    <property type="entry name" value="RPB6/omega subunit-like"/>
    <property type="match status" value="1"/>
</dbReference>
<reference key="1">
    <citation type="journal article" date="2000" name="Nature">
        <title>DNA sequence of both chromosomes of the cholera pathogen Vibrio cholerae.</title>
        <authorList>
            <person name="Heidelberg J.F."/>
            <person name="Eisen J.A."/>
            <person name="Nelson W.C."/>
            <person name="Clayton R.A."/>
            <person name="Gwinn M.L."/>
            <person name="Dodson R.J."/>
            <person name="Haft D.H."/>
            <person name="Hickey E.K."/>
            <person name="Peterson J.D."/>
            <person name="Umayam L.A."/>
            <person name="Gill S.R."/>
            <person name="Nelson K.E."/>
            <person name="Read T.D."/>
            <person name="Tettelin H."/>
            <person name="Richardson D.L."/>
            <person name="Ermolaeva M.D."/>
            <person name="Vamathevan J.J."/>
            <person name="Bass S."/>
            <person name="Qin H."/>
            <person name="Dragoi I."/>
            <person name="Sellers P."/>
            <person name="McDonald L.A."/>
            <person name="Utterback T.R."/>
            <person name="Fleischmann R.D."/>
            <person name="Nierman W.C."/>
            <person name="White O."/>
            <person name="Salzberg S.L."/>
            <person name="Smith H.O."/>
            <person name="Colwell R.R."/>
            <person name="Mekalanos J.J."/>
            <person name="Venter J.C."/>
            <person name="Fraser C.M."/>
        </authorList>
    </citation>
    <scope>NUCLEOTIDE SEQUENCE [LARGE SCALE GENOMIC DNA]</scope>
    <source>
        <strain>ATCC 39315 / El Tor Inaba N16961</strain>
    </source>
</reference>
<organism>
    <name type="scientific">Vibrio cholerae serotype O1 (strain ATCC 39315 / El Tor Inaba N16961)</name>
    <dbReference type="NCBI Taxonomy" id="243277"/>
    <lineage>
        <taxon>Bacteria</taxon>
        <taxon>Pseudomonadati</taxon>
        <taxon>Pseudomonadota</taxon>
        <taxon>Gammaproteobacteria</taxon>
        <taxon>Vibrionales</taxon>
        <taxon>Vibrionaceae</taxon>
        <taxon>Vibrio</taxon>
    </lineage>
</organism>
<keyword id="KW-0240">DNA-directed RNA polymerase</keyword>
<keyword id="KW-0548">Nucleotidyltransferase</keyword>
<keyword id="KW-1185">Reference proteome</keyword>
<keyword id="KW-0804">Transcription</keyword>
<keyword id="KW-0808">Transferase</keyword>
<feature type="chain" id="PRO_0000129009" description="DNA-directed RNA polymerase subunit omega">
    <location>
        <begin position="1"/>
        <end position="90"/>
    </location>
</feature>
<feature type="region of interest" description="Disordered" evidence="2">
    <location>
        <begin position="70"/>
        <end position="90"/>
    </location>
</feature>
<accession>Q9KNM3</accession>
<sequence>MARVTVQDAVEKIGNRFDLVLVAARRARQMQSGGKDALVPEENDKPTVIALREIEEGLITKDVLDARERQEQQEQEAAELAAVSSIMHNR</sequence>
<proteinExistence type="inferred from homology"/>
<name>RPOZ_VIBCH</name>
<evidence type="ECO:0000250" key="1"/>
<evidence type="ECO:0000256" key="2">
    <source>
        <dbReference type="SAM" id="MobiDB-lite"/>
    </source>
</evidence>
<evidence type="ECO:0000305" key="3"/>